<feature type="chain" id="PRO_1000203748" description="Serine--tRNA ligase">
    <location>
        <begin position="1"/>
        <end position="423"/>
    </location>
</feature>
<feature type="region of interest" description="Disordered" evidence="2">
    <location>
        <begin position="1"/>
        <end position="26"/>
    </location>
</feature>
<feature type="compositionally biased region" description="Basic and acidic residues" evidence="2">
    <location>
        <begin position="1"/>
        <end position="12"/>
    </location>
</feature>
<feature type="binding site" evidence="1">
    <location>
        <begin position="230"/>
        <end position="232"/>
    </location>
    <ligand>
        <name>L-serine</name>
        <dbReference type="ChEBI" id="CHEBI:33384"/>
    </ligand>
</feature>
<feature type="binding site" evidence="1">
    <location>
        <begin position="261"/>
        <end position="263"/>
    </location>
    <ligand>
        <name>ATP</name>
        <dbReference type="ChEBI" id="CHEBI:30616"/>
    </ligand>
</feature>
<feature type="binding site" evidence="1">
    <location>
        <position position="277"/>
    </location>
    <ligand>
        <name>ATP</name>
        <dbReference type="ChEBI" id="CHEBI:30616"/>
    </ligand>
</feature>
<feature type="binding site" evidence="1">
    <location>
        <position position="284"/>
    </location>
    <ligand>
        <name>L-serine</name>
        <dbReference type="ChEBI" id="CHEBI:33384"/>
    </ligand>
</feature>
<feature type="binding site" evidence="1">
    <location>
        <begin position="348"/>
        <end position="351"/>
    </location>
    <ligand>
        <name>ATP</name>
        <dbReference type="ChEBI" id="CHEBI:30616"/>
    </ligand>
</feature>
<feature type="binding site" evidence="1">
    <location>
        <position position="383"/>
    </location>
    <ligand>
        <name>L-serine</name>
        <dbReference type="ChEBI" id="CHEBI:33384"/>
    </ligand>
</feature>
<keyword id="KW-0030">Aminoacyl-tRNA synthetase</keyword>
<keyword id="KW-0067">ATP-binding</keyword>
<keyword id="KW-0963">Cytoplasm</keyword>
<keyword id="KW-0436">Ligase</keyword>
<keyword id="KW-0547">Nucleotide-binding</keyword>
<keyword id="KW-0648">Protein biosynthesis</keyword>
<keyword id="KW-1185">Reference proteome</keyword>
<accession>C5BWI5</accession>
<protein>
    <recommendedName>
        <fullName evidence="1">Serine--tRNA ligase</fullName>
        <ecNumber evidence="1">6.1.1.11</ecNumber>
    </recommendedName>
    <alternativeName>
        <fullName evidence="1">Seryl-tRNA synthetase</fullName>
        <shortName evidence="1">SerRS</shortName>
    </alternativeName>
    <alternativeName>
        <fullName evidence="1">Seryl-tRNA(Ser/Sec) synthetase</fullName>
    </alternativeName>
</protein>
<proteinExistence type="inferred from homology"/>
<organism>
    <name type="scientific">Beutenbergia cavernae (strain ATCC BAA-8 / DSM 12333 / CCUG 43141 / JCM 11478 / NBRC 16432 / NCIMB 13614 / HKI 0122)</name>
    <dbReference type="NCBI Taxonomy" id="471853"/>
    <lineage>
        <taxon>Bacteria</taxon>
        <taxon>Bacillati</taxon>
        <taxon>Actinomycetota</taxon>
        <taxon>Actinomycetes</taxon>
        <taxon>Micrococcales</taxon>
        <taxon>Beutenbergiaceae</taxon>
        <taxon>Beutenbergia</taxon>
    </lineage>
</organism>
<comment type="function">
    <text evidence="1">Catalyzes the attachment of serine to tRNA(Ser). Is also able to aminoacylate tRNA(Sec) with serine, to form the misacylated tRNA L-seryl-tRNA(Sec), which will be further converted into selenocysteinyl-tRNA(Sec).</text>
</comment>
<comment type="catalytic activity">
    <reaction evidence="1">
        <text>tRNA(Ser) + L-serine + ATP = L-seryl-tRNA(Ser) + AMP + diphosphate + H(+)</text>
        <dbReference type="Rhea" id="RHEA:12292"/>
        <dbReference type="Rhea" id="RHEA-COMP:9669"/>
        <dbReference type="Rhea" id="RHEA-COMP:9703"/>
        <dbReference type="ChEBI" id="CHEBI:15378"/>
        <dbReference type="ChEBI" id="CHEBI:30616"/>
        <dbReference type="ChEBI" id="CHEBI:33019"/>
        <dbReference type="ChEBI" id="CHEBI:33384"/>
        <dbReference type="ChEBI" id="CHEBI:78442"/>
        <dbReference type="ChEBI" id="CHEBI:78533"/>
        <dbReference type="ChEBI" id="CHEBI:456215"/>
        <dbReference type="EC" id="6.1.1.11"/>
    </reaction>
</comment>
<comment type="catalytic activity">
    <reaction evidence="1">
        <text>tRNA(Sec) + L-serine + ATP = L-seryl-tRNA(Sec) + AMP + diphosphate + H(+)</text>
        <dbReference type="Rhea" id="RHEA:42580"/>
        <dbReference type="Rhea" id="RHEA-COMP:9742"/>
        <dbReference type="Rhea" id="RHEA-COMP:10128"/>
        <dbReference type="ChEBI" id="CHEBI:15378"/>
        <dbReference type="ChEBI" id="CHEBI:30616"/>
        <dbReference type="ChEBI" id="CHEBI:33019"/>
        <dbReference type="ChEBI" id="CHEBI:33384"/>
        <dbReference type="ChEBI" id="CHEBI:78442"/>
        <dbReference type="ChEBI" id="CHEBI:78533"/>
        <dbReference type="ChEBI" id="CHEBI:456215"/>
        <dbReference type="EC" id="6.1.1.11"/>
    </reaction>
</comment>
<comment type="pathway">
    <text evidence="1">Aminoacyl-tRNA biosynthesis; selenocysteinyl-tRNA(Sec) biosynthesis; L-seryl-tRNA(Sec) from L-serine and tRNA(Sec): step 1/1.</text>
</comment>
<comment type="subunit">
    <text evidence="1">Homodimer. The tRNA molecule binds across the dimer.</text>
</comment>
<comment type="subcellular location">
    <subcellularLocation>
        <location evidence="1">Cytoplasm</location>
    </subcellularLocation>
</comment>
<comment type="domain">
    <text evidence="1">Consists of two distinct domains, a catalytic core and a N-terminal extension that is involved in tRNA binding.</text>
</comment>
<comment type="similarity">
    <text evidence="1">Belongs to the class-II aminoacyl-tRNA synthetase family. Type-1 seryl-tRNA synthetase subfamily.</text>
</comment>
<evidence type="ECO:0000255" key="1">
    <source>
        <dbReference type="HAMAP-Rule" id="MF_00176"/>
    </source>
</evidence>
<evidence type="ECO:0000256" key="2">
    <source>
        <dbReference type="SAM" id="MobiDB-lite"/>
    </source>
</evidence>
<gene>
    <name evidence="1" type="primary">serS</name>
    <name type="ordered locus">Bcav_0379</name>
</gene>
<reference key="1">
    <citation type="journal article" date="2009" name="Stand. Genomic Sci.">
        <title>Complete genome sequence of Beutenbergia cavernae type strain (HKI 0122).</title>
        <authorList>
            <person name="Land M."/>
            <person name="Pukall R."/>
            <person name="Abt B."/>
            <person name="Goker M."/>
            <person name="Rohde M."/>
            <person name="Glavina Del Rio T."/>
            <person name="Tice H."/>
            <person name="Copeland A."/>
            <person name="Cheng J.F."/>
            <person name="Lucas S."/>
            <person name="Chen F."/>
            <person name="Nolan M."/>
            <person name="Bruce D."/>
            <person name="Goodwin L."/>
            <person name="Pitluck S."/>
            <person name="Ivanova N."/>
            <person name="Mavromatis K."/>
            <person name="Ovchinnikova G."/>
            <person name="Pati A."/>
            <person name="Chen A."/>
            <person name="Palaniappan K."/>
            <person name="Hauser L."/>
            <person name="Chang Y.J."/>
            <person name="Jefferies C.C."/>
            <person name="Saunders E."/>
            <person name="Brettin T."/>
            <person name="Detter J.C."/>
            <person name="Han C."/>
            <person name="Chain P."/>
            <person name="Bristow J."/>
            <person name="Eisen J.A."/>
            <person name="Markowitz V."/>
            <person name="Hugenholtz P."/>
            <person name="Kyrpides N.C."/>
            <person name="Klenk H.P."/>
            <person name="Lapidus A."/>
        </authorList>
    </citation>
    <scope>NUCLEOTIDE SEQUENCE [LARGE SCALE GENOMIC DNA]</scope>
    <source>
        <strain>ATCC BAA-8 / DSM 12333 / CCUG 43141 / JCM 11478 / NBRC 16432 / NCIMB 13614 / HKI 0122</strain>
    </source>
</reference>
<name>SYS_BEUC1</name>
<sequence length="423" mass="46598">MIDLKALRENPDVGRASQRSRGEDPELVDRLLDADARHRALLTSFEQQRAEQKELSRAVGKAAPQDRPAVLAHAKSRAEQVKSAEADADRARAELDALLSRMPNIVADGVPPGGEDDYVVLRHEGTPRDFAAEGFTPRDHLELGERLRAIDTERGAKVSGARFFYLTGLGARLELALLNAAIDKALTAGFTPVITPTLVKPEIMAGTGFLGAHAEEVYRIEKDDLYLVGTSEVALAGYHANEIVDLSDGPLRYAGWSACYRREAGSHGKDTRGIIRVHQFHKVEMFSYARLEDAAVEHERLLAWEEELLRLVELPYRVIDTAAGDLGSSAARKFDCEAWLPTQERYLELTSTSNCTSFQARRLGTRERLEDGSTRPVATLNGTLATTRWIVTILENHQNPDGSVRVPAGLQPYLGGLTELRAS</sequence>
<dbReference type="EC" id="6.1.1.11" evidence="1"/>
<dbReference type="EMBL" id="CP001618">
    <property type="protein sequence ID" value="ACQ78643.1"/>
    <property type="molecule type" value="Genomic_DNA"/>
</dbReference>
<dbReference type="RefSeq" id="WP_012725423.1">
    <property type="nucleotide sequence ID" value="NC_012669.1"/>
</dbReference>
<dbReference type="SMR" id="C5BWI5"/>
<dbReference type="STRING" id="471853.Bcav_0379"/>
<dbReference type="KEGG" id="bcv:Bcav_0379"/>
<dbReference type="eggNOG" id="COG0172">
    <property type="taxonomic scope" value="Bacteria"/>
</dbReference>
<dbReference type="HOGENOM" id="CLU_023797_0_1_11"/>
<dbReference type="OrthoDB" id="9804647at2"/>
<dbReference type="UniPathway" id="UPA00906">
    <property type="reaction ID" value="UER00895"/>
</dbReference>
<dbReference type="Proteomes" id="UP000007962">
    <property type="component" value="Chromosome"/>
</dbReference>
<dbReference type="GO" id="GO:0005737">
    <property type="term" value="C:cytoplasm"/>
    <property type="evidence" value="ECO:0007669"/>
    <property type="project" value="UniProtKB-SubCell"/>
</dbReference>
<dbReference type="GO" id="GO:0005524">
    <property type="term" value="F:ATP binding"/>
    <property type="evidence" value="ECO:0007669"/>
    <property type="project" value="UniProtKB-UniRule"/>
</dbReference>
<dbReference type="GO" id="GO:0004828">
    <property type="term" value="F:serine-tRNA ligase activity"/>
    <property type="evidence" value="ECO:0007669"/>
    <property type="project" value="UniProtKB-UniRule"/>
</dbReference>
<dbReference type="GO" id="GO:0016260">
    <property type="term" value="P:selenocysteine biosynthetic process"/>
    <property type="evidence" value="ECO:0007669"/>
    <property type="project" value="UniProtKB-UniRule"/>
</dbReference>
<dbReference type="GO" id="GO:0006434">
    <property type="term" value="P:seryl-tRNA aminoacylation"/>
    <property type="evidence" value="ECO:0007669"/>
    <property type="project" value="UniProtKB-UniRule"/>
</dbReference>
<dbReference type="CDD" id="cd00770">
    <property type="entry name" value="SerRS_core"/>
    <property type="match status" value="1"/>
</dbReference>
<dbReference type="Gene3D" id="3.30.930.10">
    <property type="entry name" value="Bira Bifunctional Protein, Domain 2"/>
    <property type="match status" value="1"/>
</dbReference>
<dbReference type="Gene3D" id="1.10.287.40">
    <property type="entry name" value="Serine-tRNA synthetase, tRNA binding domain"/>
    <property type="match status" value="1"/>
</dbReference>
<dbReference type="HAMAP" id="MF_00176">
    <property type="entry name" value="Ser_tRNA_synth_type1"/>
    <property type="match status" value="1"/>
</dbReference>
<dbReference type="InterPro" id="IPR002314">
    <property type="entry name" value="aa-tRNA-synt_IIb"/>
</dbReference>
<dbReference type="InterPro" id="IPR006195">
    <property type="entry name" value="aa-tRNA-synth_II"/>
</dbReference>
<dbReference type="InterPro" id="IPR045864">
    <property type="entry name" value="aa-tRNA-synth_II/BPL/LPL"/>
</dbReference>
<dbReference type="InterPro" id="IPR002317">
    <property type="entry name" value="Ser-tRNA-ligase_type_1"/>
</dbReference>
<dbReference type="InterPro" id="IPR015866">
    <property type="entry name" value="Ser-tRNA-synth_1_N"/>
</dbReference>
<dbReference type="InterPro" id="IPR042103">
    <property type="entry name" value="SerRS_1_N_sf"/>
</dbReference>
<dbReference type="InterPro" id="IPR033729">
    <property type="entry name" value="SerRS_core"/>
</dbReference>
<dbReference type="InterPro" id="IPR010978">
    <property type="entry name" value="tRNA-bd_arm"/>
</dbReference>
<dbReference type="NCBIfam" id="TIGR00414">
    <property type="entry name" value="serS"/>
    <property type="match status" value="1"/>
</dbReference>
<dbReference type="PANTHER" id="PTHR11778">
    <property type="entry name" value="SERYL-TRNA SYNTHETASE"/>
    <property type="match status" value="1"/>
</dbReference>
<dbReference type="Pfam" id="PF02403">
    <property type="entry name" value="Seryl_tRNA_N"/>
    <property type="match status" value="1"/>
</dbReference>
<dbReference type="Pfam" id="PF00587">
    <property type="entry name" value="tRNA-synt_2b"/>
    <property type="match status" value="1"/>
</dbReference>
<dbReference type="PIRSF" id="PIRSF001529">
    <property type="entry name" value="Ser-tRNA-synth_IIa"/>
    <property type="match status" value="1"/>
</dbReference>
<dbReference type="PRINTS" id="PR00981">
    <property type="entry name" value="TRNASYNTHSER"/>
</dbReference>
<dbReference type="SUPFAM" id="SSF55681">
    <property type="entry name" value="Class II aaRS and biotin synthetases"/>
    <property type="match status" value="1"/>
</dbReference>
<dbReference type="SUPFAM" id="SSF46589">
    <property type="entry name" value="tRNA-binding arm"/>
    <property type="match status" value="1"/>
</dbReference>
<dbReference type="PROSITE" id="PS50862">
    <property type="entry name" value="AA_TRNA_LIGASE_II"/>
    <property type="match status" value="1"/>
</dbReference>